<protein>
    <recommendedName>
        <fullName evidence="1">Putative dihydroorotase</fullName>
        <shortName evidence="1">DHOase</shortName>
        <ecNumber evidence="1">3.5.2.3</ecNumber>
    </recommendedName>
</protein>
<comment type="function">
    <text evidence="1">Catalyzes the reversible cyclization of carbamoyl aspartate to dihydroorotate.</text>
</comment>
<comment type="catalytic activity">
    <reaction evidence="1">
        <text>(S)-dihydroorotate + H2O = N-carbamoyl-L-aspartate + H(+)</text>
        <dbReference type="Rhea" id="RHEA:24296"/>
        <dbReference type="ChEBI" id="CHEBI:15377"/>
        <dbReference type="ChEBI" id="CHEBI:15378"/>
        <dbReference type="ChEBI" id="CHEBI:30864"/>
        <dbReference type="ChEBI" id="CHEBI:32814"/>
        <dbReference type="EC" id="3.5.2.3"/>
    </reaction>
</comment>
<comment type="pathway">
    <text evidence="1">Pyrimidine metabolism; UMP biosynthesis via de novo pathway; (S)-dihydroorotate from bicarbonate: step 3/3.</text>
</comment>
<comment type="similarity">
    <text evidence="2">Belongs to the metallo-dependent hydrolases superfamily. DHOase family. Class I DHOase subfamily.</text>
</comment>
<comment type="caution">
    <text evidence="2">This protein does not encode the conserved residues that usually bind zinc.</text>
</comment>
<feature type="chain" id="PRO_0000147245" description="Putative dihydroorotase">
    <location>
        <begin position="1"/>
        <end position="456"/>
    </location>
</feature>
<proteinExistence type="inferred from homology"/>
<gene>
    <name evidence="1" type="primary">pyrC</name>
    <name type="ordered locus">RB7430</name>
</gene>
<evidence type="ECO:0000250" key="1">
    <source>
        <dbReference type="UniProtKB" id="Q81WF0"/>
    </source>
</evidence>
<evidence type="ECO:0000305" key="2"/>
<dbReference type="EC" id="3.5.2.3" evidence="1"/>
<dbReference type="EMBL" id="BX294146">
    <property type="protein sequence ID" value="CAD75356.1"/>
    <property type="molecule type" value="Genomic_DNA"/>
</dbReference>
<dbReference type="RefSeq" id="NP_867809.1">
    <property type="nucleotide sequence ID" value="NC_005027.1"/>
</dbReference>
<dbReference type="SMR" id="Q7UNR2"/>
<dbReference type="STRING" id="243090.RB7430"/>
<dbReference type="EnsemblBacteria" id="CAD75356">
    <property type="protein sequence ID" value="CAD75356"/>
    <property type="gene ID" value="RB7430"/>
</dbReference>
<dbReference type="KEGG" id="rba:RB7430"/>
<dbReference type="PATRIC" id="fig|243090.15.peg.3584"/>
<dbReference type="eggNOG" id="COG0044">
    <property type="taxonomic scope" value="Bacteria"/>
</dbReference>
<dbReference type="HOGENOM" id="CLU_015572_1_0_0"/>
<dbReference type="InParanoid" id="Q7UNR2"/>
<dbReference type="OrthoDB" id="9765462at2"/>
<dbReference type="UniPathway" id="UPA00070">
    <property type="reaction ID" value="UER00117"/>
</dbReference>
<dbReference type="Proteomes" id="UP000001025">
    <property type="component" value="Chromosome"/>
</dbReference>
<dbReference type="GO" id="GO:0005737">
    <property type="term" value="C:cytoplasm"/>
    <property type="evidence" value="ECO:0000318"/>
    <property type="project" value="GO_Central"/>
</dbReference>
<dbReference type="GO" id="GO:0004038">
    <property type="term" value="F:allantoinase activity"/>
    <property type="evidence" value="ECO:0000318"/>
    <property type="project" value="GO_Central"/>
</dbReference>
<dbReference type="GO" id="GO:0004151">
    <property type="term" value="F:dihydroorotase activity"/>
    <property type="evidence" value="ECO:0007669"/>
    <property type="project" value="UniProtKB-EC"/>
</dbReference>
<dbReference type="GO" id="GO:0046872">
    <property type="term" value="F:metal ion binding"/>
    <property type="evidence" value="ECO:0007669"/>
    <property type="project" value="InterPro"/>
</dbReference>
<dbReference type="GO" id="GO:0044205">
    <property type="term" value="P:'de novo' UMP biosynthetic process"/>
    <property type="evidence" value="ECO:0007669"/>
    <property type="project" value="UniProtKB-UniPathway"/>
</dbReference>
<dbReference type="GO" id="GO:0006145">
    <property type="term" value="P:purine nucleobase catabolic process"/>
    <property type="evidence" value="ECO:0000318"/>
    <property type="project" value="GO_Central"/>
</dbReference>
<dbReference type="CDD" id="cd01317">
    <property type="entry name" value="DHOase_IIa"/>
    <property type="match status" value="1"/>
</dbReference>
<dbReference type="Gene3D" id="3.20.20.140">
    <property type="entry name" value="Metal-dependent hydrolases"/>
    <property type="match status" value="1"/>
</dbReference>
<dbReference type="Gene3D" id="2.30.40.10">
    <property type="entry name" value="Urease, subunit C, domain 1"/>
    <property type="match status" value="1"/>
</dbReference>
<dbReference type="InterPro" id="IPR006680">
    <property type="entry name" value="Amidohydro-rel"/>
</dbReference>
<dbReference type="InterPro" id="IPR004722">
    <property type="entry name" value="DHOase"/>
</dbReference>
<dbReference type="InterPro" id="IPR050138">
    <property type="entry name" value="DHOase/Allantoinase_Hydrolase"/>
</dbReference>
<dbReference type="InterPro" id="IPR011059">
    <property type="entry name" value="Metal-dep_hydrolase_composite"/>
</dbReference>
<dbReference type="InterPro" id="IPR032466">
    <property type="entry name" value="Metal_Hydrolase"/>
</dbReference>
<dbReference type="NCBIfam" id="TIGR00857">
    <property type="entry name" value="pyrC_multi"/>
    <property type="match status" value="1"/>
</dbReference>
<dbReference type="PANTHER" id="PTHR43668">
    <property type="entry name" value="ALLANTOINASE"/>
    <property type="match status" value="1"/>
</dbReference>
<dbReference type="PANTHER" id="PTHR43668:SF2">
    <property type="entry name" value="ALLANTOINASE"/>
    <property type="match status" value="1"/>
</dbReference>
<dbReference type="Pfam" id="PF01979">
    <property type="entry name" value="Amidohydro_1"/>
    <property type="match status" value="1"/>
</dbReference>
<dbReference type="SUPFAM" id="SSF51338">
    <property type="entry name" value="Composite domain of metallo-dependent hydrolases"/>
    <property type="match status" value="1"/>
</dbReference>
<dbReference type="SUPFAM" id="SSF51556">
    <property type="entry name" value="Metallo-dependent hydrolases"/>
    <property type="match status" value="1"/>
</dbReference>
<keyword id="KW-0378">Hydrolase</keyword>
<keyword id="KW-0665">Pyrimidine biosynthesis</keyword>
<keyword id="KW-1185">Reference proteome</keyword>
<reference key="1">
    <citation type="journal article" date="2003" name="Proc. Natl. Acad. Sci. U.S.A.">
        <title>Complete genome sequence of the marine planctomycete Pirellula sp. strain 1.</title>
        <authorList>
            <person name="Gloeckner F.O."/>
            <person name="Kube M."/>
            <person name="Bauer M."/>
            <person name="Teeling H."/>
            <person name="Lombardot T."/>
            <person name="Ludwig W."/>
            <person name="Gade D."/>
            <person name="Beck A."/>
            <person name="Borzym K."/>
            <person name="Heitmann K."/>
            <person name="Rabus R."/>
            <person name="Schlesner H."/>
            <person name="Amann R."/>
            <person name="Reinhardt R."/>
        </authorList>
    </citation>
    <scope>NUCLEOTIDE SEQUENCE [LARGE SCALE GENOMIC DNA]</scope>
    <source>
        <strain>DSM 10527 / NCIMB 13988 / SH1</strain>
    </source>
</reference>
<name>PYRC_RHOBA</name>
<accession>Q7UNR2</accession>
<organism>
    <name type="scientific">Rhodopirellula baltica (strain DSM 10527 / NCIMB 13988 / SH1)</name>
    <dbReference type="NCBI Taxonomy" id="243090"/>
    <lineage>
        <taxon>Bacteria</taxon>
        <taxon>Pseudomonadati</taxon>
        <taxon>Planctomycetota</taxon>
        <taxon>Planctomycetia</taxon>
        <taxon>Pirellulales</taxon>
        <taxon>Pirellulaceae</taxon>
        <taxon>Rhodopirellula</taxon>
    </lineage>
</organism>
<sequence length="456" mass="48514">MVVGQRERKRRCIRGEPLMNDTTWVLDGGRLIDPANGIDRIARLVLHEGKVHSIDTPDGDVPPDAGRLDVTGKIVAPGLVDLATELREPGSEEDETIQTGSNAALAGGYTTVLCCSSTKPLMDSAASVQLVRQIAQRVDGVRVLPIACLSKGRQAEQMAELGILAAAGAAGFSDTPRPMPNDALLKRALDYCRMFDLPIFDRPEVPELADGGVMHDGQIGLILGLKGLPTEAEDLAVARDVRLAEATKGRLHVGPVSTMGSIDMIGRVKSRGIHISASVCPHNLFGSDELLRSYDSRYKVHPPMRSPSHVEALRNAVAEGVIDAIESGHMPRAQEKKANDLDLAPFGASALETTLAAIATDLVETKILPWSRAIECLSTAPARIAGVKGGTLSVGANADVTVIDPLNAWSVEAKEFRSRCHSSPMTGRTLTARVTHTLVGGRLKFELHPTVASAAS</sequence>